<reference key="1">
    <citation type="journal article" date="1995" name="Science">
        <title>Whole-genome random sequencing and assembly of Haemophilus influenzae Rd.</title>
        <authorList>
            <person name="Fleischmann R.D."/>
            <person name="Adams M.D."/>
            <person name="White O."/>
            <person name="Clayton R.A."/>
            <person name="Kirkness E.F."/>
            <person name="Kerlavage A.R."/>
            <person name="Bult C.J."/>
            <person name="Tomb J.-F."/>
            <person name="Dougherty B.A."/>
            <person name="Merrick J.M."/>
            <person name="McKenney K."/>
            <person name="Sutton G.G."/>
            <person name="FitzHugh W."/>
            <person name="Fields C.A."/>
            <person name="Gocayne J.D."/>
            <person name="Scott J.D."/>
            <person name="Shirley R."/>
            <person name="Liu L.-I."/>
            <person name="Glodek A."/>
            <person name="Kelley J.M."/>
            <person name="Weidman J.F."/>
            <person name="Phillips C.A."/>
            <person name="Spriggs T."/>
            <person name="Hedblom E."/>
            <person name="Cotton M.D."/>
            <person name="Utterback T.R."/>
            <person name="Hanna M.C."/>
            <person name="Nguyen D.T."/>
            <person name="Saudek D.M."/>
            <person name="Brandon R.C."/>
            <person name="Fine L.D."/>
            <person name="Fritchman J.L."/>
            <person name="Fuhrmann J.L."/>
            <person name="Geoghagen N.S.M."/>
            <person name="Gnehm C.L."/>
            <person name="McDonald L.A."/>
            <person name="Small K.V."/>
            <person name="Fraser C.M."/>
            <person name="Smith H.O."/>
            <person name="Venter J.C."/>
        </authorList>
    </citation>
    <scope>NUCLEOTIDE SEQUENCE [LARGE SCALE GENOMIC DNA]</scope>
    <source>
        <strain>ATCC 51907 / DSM 11121 / KW20 / Rd</strain>
    </source>
</reference>
<proteinExistence type="predicted"/>
<name>Y1043_HAEIN</name>
<evidence type="ECO:0000250" key="1"/>
<evidence type="ECO:0000255" key="2">
    <source>
        <dbReference type="PROSITE-ProRule" id="PRU00711"/>
    </source>
</evidence>
<protein>
    <recommendedName>
        <fullName>Uncharacterized protein HI_1043</fullName>
    </recommendedName>
</protein>
<accession>P44101</accession>
<dbReference type="EMBL" id="L42023">
    <property type="protein sequence ID" value="AAC22702.1"/>
    <property type="molecule type" value="Genomic_DNA"/>
</dbReference>
<dbReference type="PIR" id="B64019">
    <property type="entry name" value="B64019"/>
</dbReference>
<dbReference type="RefSeq" id="NP_439202.1">
    <property type="nucleotide sequence ID" value="NC_000907.1"/>
</dbReference>
<dbReference type="STRING" id="71421.HI_1043"/>
<dbReference type="EnsemblBacteria" id="AAC22702">
    <property type="protein sequence ID" value="AAC22702"/>
    <property type="gene ID" value="HI_1043"/>
</dbReference>
<dbReference type="KEGG" id="hin:HI_1043"/>
<dbReference type="PATRIC" id="fig|71421.8.peg.1088"/>
<dbReference type="eggNOG" id="COG1145">
    <property type="taxonomic scope" value="Bacteria"/>
</dbReference>
<dbReference type="eggNOG" id="COG2221">
    <property type="taxonomic scope" value="Bacteria"/>
</dbReference>
<dbReference type="HOGENOM" id="CLU_077329_1_0_6"/>
<dbReference type="OrthoDB" id="9808559at2"/>
<dbReference type="PhylomeDB" id="P44101"/>
<dbReference type="BioCyc" id="HINF71421:G1GJ1-1082-MONOMER"/>
<dbReference type="Proteomes" id="UP000000579">
    <property type="component" value="Chromosome"/>
</dbReference>
<dbReference type="GO" id="GO:0005737">
    <property type="term" value="C:cytoplasm"/>
    <property type="evidence" value="ECO:0000318"/>
    <property type="project" value="GO_Central"/>
</dbReference>
<dbReference type="GO" id="GO:0051539">
    <property type="term" value="F:4 iron, 4 sulfur cluster binding"/>
    <property type="evidence" value="ECO:0007669"/>
    <property type="project" value="UniProtKB-KW"/>
</dbReference>
<dbReference type="GO" id="GO:0046872">
    <property type="term" value="F:metal ion binding"/>
    <property type="evidence" value="ECO:0007669"/>
    <property type="project" value="UniProtKB-KW"/>
</dbReference>
<dbReference type="Gene3D" id="3.30.70.20">
    <property type="match status" value="2"/>
</dbReference>
<dbReference type="InterPro" id="IPR017896">
    <property type="entry name" value="4Fe4S_Fe-S-bd"/>
</dbReference>
<dbReference type="InterPro" id="IPR017900">
    <property type="entry name" value="4Fe4S_Fe_S_CS"/>
</dbReference>
<dbReference type="InterPro" id="IPR004496">
    <property type="entry name" value="NapF"/>
</dbReference>
<dbReference type="InterPro" id="IPR050157">
    <property type="entry name" value="PSI_iron-sulfur_center"/>
</dbReference>
<dbReference type="NCBIfam" id="TIGR00402">
    <property type="entry name" value="napF"/>
    <property type="match status" value="1"/>
</dbReference>
<dbReference type="PANTHER" id="PTHR24960:SF79">
    <property type="entry name" value="PHOTOSYSTEM I IRON-SULFUR CENTER"/>
    <property type="match status" value="1"/>
</dbReference>
<dbReference type="PANTHER" id="PTHR24960">
    <property type="entry name" value="PHOTOSYSTEM I IRON-SULFUR CENTER-RELATED"/>
    <property type="match status" value="1"/>
</dbReference>
<dbReference type="Pfam" id="PF00037">
    <property type="entry name" value="Fer4"/>
    <property type="match status" value="1"/>
</dbReference>
<dbReference type="Pfam" id="PF12838">
    <property type="entry name" value="Fer4_7"/>
    <property type="match status" value="1"/>
</dbReference>
<dbReference type="SUPFAM" id="SSF54862">
    <property type="entry name" value="4Fe-4S ferredoxins"/>
    <property type="match status" value="1"/>
</dbReference>
<dbReference type="PROSITE" id="PS00198">
    <property type="entry name" value="4FE4S_FER_1"/>
    <property type="match status" value="2"/>
</dbReference>
<dbReference type="PROSITE" id="PS51379">
    <property type="entry name" value="4FE4S_FER_2"/>
    <property type="match status" value="3"/>
</dbReference>
<keyword id="KW-0004">4Fe-4S</keyword>
<keyword id="KW-0408">Iron</keyword>
<keyword id="KW-0411">Iron-sulfur</keyword>
<keyword id="KW-0479">Metal-binding</keyword>
<keyword id="KW-1185">Reference proteome</keyword>
<keyword id="KW-0677">Repeat</keyword>
<feature type="chain" id="PRO_0000159307" description="Uncharacterized protein HI_1043">
    <location>
        <begin position="1"/>
        <end position="166"/>
    </location>
</feature>
<feature type="domain" description="4Fe-4S ferredoxin-type 1" evidence="2">
    <location>
        <begin position="44"/>
        <end position="73"/>
    </location>
</feature>
<feature type="domain" description="4Fe-4S ferredoxin-type 2" evidence="2">
    <location>
        <begin position="75"/>
        <end position="104"/>
    </location>
</feature>
<feature type="domain" description="4Fe-4S ferredoxin-type 3" evidence="2">
    <location>
        <begin position="139"/>
        <end position="166"/>
    </location>
</feature>
<feature type="binding site" evidence="1">
    <location>
        <position position="53"/>
    </location>
    <ligand>
        <name>[4Fe-4S] cluster</name>
        <dbReference type="ChEBI" id="CHEBI:49883"/>
        <label>1</label>
    </ligand>
</feature>
<feature type="binding site" evidence="1">
    <location>
        <position position="56"/>
    </location>
    <ligand>
        <name>[4Fe-4S] cluster</name>
        <dbReference type="ChEBI" id="CHEBI:49883"/>
        <label>1</label>
    </ligand>
</feature>
<feature type="binding site" evidence="1">
    <location>
        <position position="59"/>
    </location>
    <ligand>
        <name>[4Fe-4S] cluster</name>
        <dbReference type="ChEBI" id="CHEBI:49883"/>
        <label>1</label>
    </ligand>
</feature>
<feature type="binding site" evidence="1">
    <location>
        <position position="63"/>
    </location>
    <ligand>
        <name>[4Fe-4S] cluster</name>
        <dbReference type="ChEBI" id="CHEBI:49883"/>
        <label>2</label>
    </ligand>
</feature>
<feature type="binding site" evidence="1">
    <location>
        <position position="84"/>
    </location>
    <ligand>
        <name>[4Fe-4S] cluster</name>
        <dbReference type="ChEBI" id="CHEBI:49883"/>
        <label>2</label>
    </ligand>
</feature>
<feature type="binding site" evidence="1">
    <location>
        <position position="87"/>
    </location>
    <ligand>
        <name>[4Fe-4S] cluster</name>
        <dbReference type="ChEBI" id="CHEBI:49883"/>
        <label>2</label>
    </ligand>
</feature>
<feature type="binding site" evidence="1">
    <location>
        <position position="90"/>
    </location>
    <ligand>
        <name>[4Fe-4S] cluster</name>
        <dbReference type="ChEBI" id="CHEBI:49883"/>
        <label>2</label>
    </ligand>
</feature>
<feature type="binding site" evidence="1">
    <location>
        <position position="94"/>
    </location>
    <ligand>
        <name>[4Fe-4S] cluster</name>
        <dbReference type="ChEBI" id="CHEBI:49883"/>
        <label>1</label>
    </ligand>
</feature>
<sequence>MKNEAYYQAYLSHHHISRRGLLRHVFPATKSTIEKTQSRPPFSAREDLFSAVCNGCGECASACPNGLIQLKQQQATLEIDYAPCDLCGKCAEVCPTNALHPNFPGDTLLRPQFSSACLILQNQTCPDCQTACPLQAISSTLEIDNERCNGCGECKITCFVAAITLK</sequence>
<gene>
    <name type="ordered locus">HI_1043</name>
</gene>
<organism>
    <name type="scientific">Haemophilus influenzae (strain ATCC 51907 / DSM 11121 / KW20 / Rd)</name>
    <dbReference type="NCBI Taxonomy" id="71421"/>
    <lineage>
        <taxon>Bacteria</taxon>
        <taxon>Pseudomonadati</taxon>
        <taxon>Pseudomonadota</taxon>
        <taxon>Gammaproteobacteria</taxon>
        <taxon>Pasteurellales</taxon>
        <taxon>Pasteurellaceae</taxon>
        <taxon>Haemophilus</taxon>
    </lineage>
</organism>